<sequence length="117" mass="13581">MGFRVLVLVVMATTFALPFTFFEEPGRSPFRPALRSEEAQALRHGLTLLLARRADGQPPDMRQPEMRRPEMRRPEVRQPEFAELSVGQRRWDVDQCMYYCLTGVVGYSYTECETMCT</sequence>
<organism>
    <name type="scientific">Conus villepinii</name>
    <name type="common">Villepin's cone</name>
    <dbReference type="NCBI Taxonomy" id="257347"/>
    <lineage>
        <taxon>Eukaryota</taxon>
        <taxon>Metazoa</taxon>
        <taxon>Spiralia</taxon>
        <taxon>Lophotrochozoa</taxon>
        <taxon>Mollusca</taxon>
        <taxon>Gastropoda</taxon>
        <taxon>Caenogastropoda</taxon>
        <taxon>Neogastropoda</taxon>
        <taxon>Conoidea</taxon>
        <taxon>Conidae</taxon>
        <taxon>Conus</taxon>
        <taxon>Dauciconus</taxon>
    </lineage>
</organism>
<feature type="signal peptide" evidence="2">
    <location>
        <begin position="1"/>
        <end position="22"/>
    </location>
</feature>
<feature type="propeptide" id="PRO_0000446992" evidence="6">
    <location>
        <begin position="23"/>
        <end position="90"/>
    </location>
</feature>
<feature type="peptide" id="PRO_0000446993" description="Conotoxin vil14.2" evidence="6">
    <location>
        <begin position="91"/>
        <end position="117"/>
    </location>
</feature>
<feature type="region of interest" description="Disordered" evidence="3">
    <location>
        <begin position="53"/>
        <end position="77"/>
    </location>
</feature>
<feature type="compositionally biased region" description="Basic and acidic residues" evidence="3">
    <location>
        <begin position="62"/>
        <end position="77"/>
    </location>
</feature>
<feature type="disulfide bond" evidence="1">
    <location>
        <begin position="96"/>
        <end position="116"/>
    </location>
</feature>
<feature type="disulfide bond" evidence="1">
    <location>
        <begin position="100"/>
        <end position="112"/>
    </location>
</feature>
<protein>
    <recommendedName>
        <fullName evidence="4">Conotoxin vil14.2</fullName>
    </recommendedName>
</protein>
<dbReference type="EMBL" id="MH750033">
    <property type="protein sequence ID" value="AYK27406.1"/>
    <property type="molecule type" value="mRNA"/>
</dbReference>
<dbReference type="ConoServer" id="8491">
    <property type="toxin name" value="VilXIVB precursor"/>
</dbReference>
<dbReference type="GO" id="GO:0005576">
    <property type="term" value="C:extracellular region"/>
    <property type="evidence" value="ECO:0007669"/>
    <property type="project" value="UniProtKB-SubCell"/>
</dbReference>
<dbReference type="GO" id="GO:0015459">
    <property type="term" value="F:potassium channel regulator activity"/>
    <property type="evidence" value="ECO:0007669"/>
    <property type="project" value="UniProtKB-KW"/>
</dbReference>
<dbReference type="GO" id="GO:0090729">
    <property type="term" value="F:toxin activity"/>
    <property type="evidence" value="ECO:0007669"/>
    <property type="project" value="UniProtKB-KW"/>
</dbReference>
<name>CRE2_CONVL</name>
<comment type="subcellular location">
    <subcellularLocation>
        <location evidence="6">Secreted</location>
    </subcellularLocation>
</comment>
<comment type="tissue specificity">
    <text evidence="6">Expressed by the venom duct.</text>
</comment>
<comment type="domain">
    <text evidence="5">The cysteine framework is XIV (C-C-C-C).</text>
</comment>
<comment type="similarity">
    <text evidence="5">Belongs to the conotoxin R superfamily.</text>
</comment>
<accession>A0A3G1VU84</accession>
<keyword id="KW-0165">Cleavage on pair of basic residues</keyword>
<keyword id="KW-1015">Disulfide bond</keyword>
<keyword id="KW-0872">Ion channel impairing toxin</keyword>
<keyword id="KW-0528">Neurotoxin</keyword>
<keyword id="KW-0632">Potassium channel impairing toxin</keyword>
<keyword id="KW-0964">Secreted</keyword>
<keyword id="KW-0732">Signal</keyword>
<keyword id="KW-0800">Toxin</keyword>
<reference key="1">
    <citation type="journal article" date="2018" name="Peptides">
        <title>Definition of the R-superfamily of conotoxins: structural convergence of helix-loop-helix peptidic scaffolds.</title>
        <authorList>
            <person name="Moeller C."/>
            <person name="Dovell S."/>
            <person name="Melaun C."/>
            <person name="Mari F."/>
        </authorList>
    </citation>
    <scope>NUCLEOTIDE SEQUENCE [MRNA]</scope>
    <source>
        <tissue>Venom duct</tissue>
    </source>
</reference>
<proteinExistence type="inferred from homology"/>
<evidence type="ECO:0000250" key="1">
    <source>
        <dbReference type="UniProtKB" id="P84704"/>
    </source>
</evidence>
<evidence type="ECO:0000255" key="2"/>
<evidence type="ECO:0000256" key="3">
    <source>
        <dbReference type="SAM" id="MobiDB-lite"/>
    </source>
</evidence>
<evidence type="ECO:0000303" key="4">
    <source>
    </source>
</evidence>
<evidence type="ECO:0000305" key="5"/>
<evidence type="ECO:0000305" key="6">
    <source>
    </source>
</evidence>